<protein>
    <recommendedName>
        <fullName evidence="1">Fluoride-specific ion channel FluC 2</fullName>
    </recommendedName>
</protein>
<accession>Q8PYN2</accession>
<name>FLUC2_METMA</name>
<keyword id="KW-1003">Cell membrane</keyword>
<keyword id="KW-0407">Ion channel</keyword>
<keyword id="KW-0406">Ion transport</keyword>
<keyword id="KW-0472">Membrane</keyword>
<keyword id="KW-0479">Metal-binding</keyword>
<keyword id="KW-0915">Sodium</keyword>
<keyword id="KW-0812">Transmembrane</keyword>
<keyword id="KW-1133">Transmembrane helix</keyword>
<keyword id="KW-0813">Transport</keyword>
<proteinExistence type="inferred from homology"/>
<comment type="function">
    <text evidence="1">Fluoride-specific ion channel. Important for reducing fluoride concentration in the cell, thus reducing its toxicity.</text>
</comment>
<comment type="catalytic activity">
    <reaction evidence="1">
        <text>fluoride(in) = fluoride(out)</text>
        <dbReference type="Rhea" id="RHEA:76159"/>
        <dbReference type="ChEBI" id="CHEBI:17051"/>
    </reaction>
    <physiologicalReaction direction="left-to-right" evidence="1">
        <dbReference type="Rhea" id="RHEA:76160"/>
    </physiologicalReaction>
</comment>
<comment type="activity regulation">
    <text evidence="1">Na(+) is not transported, but it plays an essential structural role and its presence is essential for fluoride channel function.</text>
</comment>
<comment type="subcellular location">
    <subcellularLocation>
        <location evidence="1">Cell membrane</location>
        <topology evidence="1">Multi-pass membrane protein</topology>
    </subcellularLocation>
</comment>
<comment type="similarity">
    <text evidence="1">Belongs to the fluoride channel Fluc/FEX (TC 1.A.43) family.</text>
</comment>
<dbReference type="EMBL" id="AE008384">
    <property type="protein sequence ID" value="AAM30525.1"/>
    <property type="molecule type" value="Genomic_DNA"/>
</dbReference>
<dbReference type="SMR" id="Q8PYN2"/>
<dbReference type="KEGG" id="mma:MM_0829"/>
<dbReference type="PATRIC" id="fig|192952.21.peg.982"/>
<dbReference type="eggNOG" id="arCOG04701">
    <property type="taxonomic scope" value="Archaea"/>
</dbReference>
<dbReference type="HOGENOM" id="CLU_114342_2_3_2"/>
<dbReference type="Proteomes" id="UP000000595">
    <property type="component" value="Chromosome"/>
</dbReference>
<dbReference type="GO" id="GO:0005886">
    <property type="term" value="C:plasma membrane"/>
    <property type="evidence" value="ECO:0007669"/>
    <property type="project" value="UniProtKB-SubCell"/>
</dbReference>
<dbReference type="GO" id="GO:0062054">
    <property type="term" value="F:fluoride channel activity"/>
    <property type="evidence" value="ECO:0007669"/>
    <property type="project" value="UniProtKB-UniRule"/>
</dbReference>
<dbReference type="GO" id="GO:0046872">
    <property type="term" value="F:metal ion binding"/>
    <property type="evidence" value="ECO:0007669"/>
    <property type="project" value="UniProtKB-KW"/>
</dbReference>
<dbReference type="GO" id="GO:0140114">
    <property type="term" value="P:cellular detoxification of fluoride"/>
    <property type="evidence" value="ECO:0007669"/>
    <property type="project" value="UniProtKB-UniRule"/>
</dbReference>
<dbReference type="HAMAP" id="MF_00454">
    <property type="entry name" value="FluC"/>
    <property type="match status" value="1"/>
</dbReference>
<dbReference type="InterPro" id="IPR003691">
    <property type="entry name" value="FluC"/>
</dbReference>
<dbReference type="NCBIfam" id="NF010820">
    <property type="entry name" value="PRK14224.1"/>
    <property type="match status" value="1"/>
</dbReference>
<dbReference type="Pfam" id="PF02537">
    <property type="entry name" value="CRCB"/>
    <property type="match status" value="1"/>
</dbReference>
<gene>
    <name evidence="1" type="primary">fluC2</name>
    <name evidence="1" type="synonym">crcB2</name>
    <name type="ordered locus">MM_0829</name>
</gene>
<sequence>MPSPDKEMDKVLLIGLGGFLGAVCRFLICEHVDGQLGILSVNVLGSFMLGMIMYDAEYLSFIGPKGRLAFGTGFIGAFTTFSTFAVQSFSMAFLPALGNISANLFLTLTGVFFGRSFIKALSSREI</sequence>
<evidence type="ECO:0000255" key="1">
    <source>
        <dbReference type="HAMAP-Rule" id="MF_00454"/>
    </source>
</evidence>
<organism>
    <name type="scientific">Methanosarcina mazei (strain ATCC BAA-159 / DSM 3647 / Goe1 / Go1 / JCM 11833 / OCM 88)</name>
    <name type="common">Methanosarcina frisia</name>
    <dbReference type="NCBI Taxonomy" id="192952"/>
    <lineage>
        <taxon>Archaea</taxon>
        <taxon>Methanobacteriati</taxon>
        <taxon>Methanobacteriota</taxon>
        <taxon>Stenosarchaea group</taxon>
        <taxon>Methanomicrobia</taxon>
        <taxon>Methanosarcinales</taxon>
        <taxon>Methanosarcinaceae</taxon>
        <taxon>Methanosarcina</taxon>
    </lineage>
</organism>
<feature type="chain" id="PRO_0000110231" description="Fluoride-specific ion channel FluC 2">
    <location>
        <begin position="1"/>
        <end position="126"/>
    </location>
</feature>
<feature type="transmembrane region" description="Helical" evidence="1">
    <location>
        <begin position="11"/>
        <end position="31"/>
    </location>
</feature>
<feature type="transmembrane region" description="Helical" evidence="1">
    <location>
        <begin position="36"/>
        <end position="56"/>
    </location>
</feature>
<feature type="transmembrane region" description="Helical" evidence="1">
    <location>
        <begin position="69"/>
        <end position="89"/>
    </location>
</feature>
<feature type="transmembrane region" description="Helical" evidence="1">
    <location>
        <begin position="93"/>
        <end position="113"/>
    </location>
</feature>
<feature type="binding site" evidence="1">
    <location>
        <position position="76"/>
    </location>
    <ligand>
        <name>Na(+)</name>
        <dbReference type="ChEBI" id="CHEBI:29101"/>
        <note>structural</note>
    </ligand>
</feature>
<feature type="binding site" evidence="1">
    <location>
        <position position="79"/>
    </location>
    <ligand>
        <name>Na(+)</name>
        <dbReference type="ChEBI" id="CHEBI:29101"/>
        <note>structural</note>
    </ligand>
</feature>
<reference key="1">
    <citation type="journal article" date="2002" name="J. Mol. Microbiol. Biotechnol.">
        <title>The genome of Methanosarcina mazei: evidence for lateral gene transfer between Bacteria and Archaea.</title>
        <authorList>
            <person name="Deppenmeier U."/>
            <person name="Johann A."/>
            <person name="Hartsch T."/>
            <person name="Merkl R."/>
            <person name="Schmitz R.A."/>
            <person name="Martinez-Arias R."/>
            <person name="Henne A."/>
            <person name="Wiezer A."/>
            <person name="Baeumer S."/>
            <person name="Jacobi C."/>
            <person name="Brueggemann H."/>
            <person name="Lienard T."/>
            <person name="Christmann A."/>
            <person name="Boemecke M."/>
            <person name="Steckel S."/>
            <person name="Bhattacharyya A."/>
            <person name="Lykidis A."/>
            <person name="Overbeek R."/>
            <person name="Klenk H.-P."/>
            <person name="Gunsalus R.P."/>
            <person name="Fritz H.-J."/>
            <person name="Gottschalk G."/>
        </authorList>
    </citation>
    <scope>NUCLEOTIDE SEQUENCE [LARGE SCALE GENOMIC DNA]</scope>
    <source>
        <strain>ATCC BAA-159 / DSM 3647 / Goe1 / Go1 / JCM 11833 / OCM 88</strain>
    </source>
</reference>